<reference key="1">
    <citation type="journal article" date="2005" name="Nature">
        <title>The map-based sequence of the rice genome.</title>
        <authorList>
            <consortium name="International rice genome sequencing project (IRGSP)"/>
        </authorList>
    </citation>
    <scope>NUCLEOTIDE SEQUENCE [LARGE SCALE GENOMIC DNA]</scope>
    <source>
        <strain>cv. Nipponbare</strain>
    </source>
</reference>
<reference key="2">
    <citation type="journal article" date="2008" name="Nucleic Acids Res.">
        <title>The rice annotation project database (RAP-DB): 2008 update.</title>
        <authorList>
            <consortium name="The rice annotation project (RAP)"/>
        </authorList>
    </citation>
    <scope>GENOME REANNOTATION</scope>
    <source>
        <strain>cv. Nipponbare</strain>
    </source>
</reference>
<reference key="3">
    <citation type="journal article" date="2013" name="Rice">
        <title>Improvement of the Oryza sativa Nipponbare reference genome using next generation sequence and optical map data.</title>
        <authorList>
            <person name="Kawahara Y."/>
            <person name="de la Bastide M."/>
            <person name="Hamilton J.P."/>
            <person name="Kanamori H."/>
            <person name="McCombie W.R."/>
            <person name="Ouyang S."/>
            <person name="Schwartz D.C."/>
            <person name="Tanaka T."/>
            <person name="Wu J."/>
            <person name="Zhou S."/>
            <person name="Childs K.L."/>
            <person name="Davidson R.M."/>
            <person name="Lin H."/>
            <person name="Quesada-Ocampo L."/>
            <person name="Vaillancourt B."/>
            <person name="Sakai H."/>
            <person name="Lee S.S."/>
            <person name="Kim J."/>
            <person name="Numa H."/>
            <person name="Itoh T."/>
            <person name="Buell C.R."/>
            <person name="Matsumoto T."/>
        </authorList>
    </citation>
    <scope>GENOME REANNOTATION</scope>
    <source>
        <strain>cv. Nipponbare</strain>
    </source>
</reference>
<reference key="4">
    <citation type="journal article" date="2003" name="Science">
        <title>Collection, mapping, and annotation of over 28,000 cDNA clones from japonica rice.</title>
        <authorList>
            <consortium name="The rice full-length cDNA consortium"/>
        </authorList>
    </citation>
    <scope>NUCLEOTIDE SEQUENCE [LARGE SCALE MRNA]</scope>
    <source>
        <strain>cv. Nipponbare</strain>
    </source>
</reference>
<reference key="5">
    <citation type="submission" date="2001-03" db="EMBL/GenBank/DDBJ databases">
        <title>Leaf-associated cDNA encoding a putative protein phosphatase 2C.</title>
        <authorList>
            <person name="Lee R.H."/>
            <person name="Chen S.C.G."/>
        </authorList>
    </citation>
    <scope>NUCLEOTIDE SEQUENCE [MRNA] OF 389-518</scope>
    <source>
        <strain>cv. Tainung 57</strain>
        <tissue>Seedling leaf</tissue>
    </source>
</reference>
<reference key="6">
    <citation type="journal article" date="2008" name="BMC Genomics">
        <title>Genome-wide and expression analysis of protein phosphatase 2C in rice and Arabidopsis.</title>
        <authorList>
            <person name="Xue T."/>
            <person name="Wang D."/>
            <person name="Zhang S."/>
            <person name="Ehlting J."/>
            <person name="Ni F."/>
            <person name="Jacab S."/>
            <person name="Zheng C."/>
            <person name="Zhong Y."/>
        </authorList>
    </citation>
    <scope>GENE FAMILY</scope>
    <scope>NOMENCLATURE</scope>
</reference>
<dbReference type="EC" id="3.1.3.16"/>
<dbReference type="EMBL" id="AP004787">
    <property type="protein sequence ID" value="BAD19485.1"/>
    <property type="molecule type" value="Genomic_DNA"/>
</dbReference>
<dbReference type="EMBL" id="AP005065">
    <property type="protein sequence ID" value="BAD19608.1"/>
    <property type="molecule type" value="Genomic_DNA"/>
</dbReference>
<dbReference type="EMBL" id="AP008208">
    <property type="protein sequence ID" value="BAF08749.1"/>
    <property type="molecule type" value="Genomic_DNA"/>
</dbReference>
<dbReference type="EMBL" id="AP014958">
    <property type="protein sequence ID" value="BAS78624.1"/>
    <property type="molecule type" value="Genomic_DNA"/>
</dbReference>
<dbReference type="EMBL" id="AK120615">
    <property type="protein sequence ID" value="BAH00094.1"/>
    <property type="molecule type" value="mRNA"/>
</dbReference>
<dbReference type="EMBL" id="AF358769">
    <property type="protein sequence ID" value="AAL83985.1"/>
    <property type="molecule type" value="mRNA"/>
</dbReference>
<dbReference type="RefSeq" id="XP_015626465.1">
    <property type="nucleotide sequence ID" value="XM_015770979.1"/>
</dbReference>
<dbReference type="SMR" id="Q6K6N7"/>
<dbReference type="FunCoup" id="Q6K6N7">
    <property type="interactions" value="6"/>
</dbReference>
<dbReference type="STRING" id="39947.Q6K6N7"/>
<dbReference type="PaxDb" id="39947-Q6K6N7"/>
<dbReference type="EnsemblPlants" id="Os02t0471500-01">
    <property type="protein sequence ID" value="Os02t0471500-01"/>
    <property type="gene ID" value="Os02g0471500"/>
</dbReference>
<dbReference type="EnsemblPlants" id="Os02t0471500-02">
    <property type="protein sequence ID" value="Os02t0471500-02"/>
    <property type="gene ID" value="Os02g0471500"/>
</dbReference>
<dbReference type="Gramene" id="Os02t0471500-01">
    <property type="protein sequence ID" value="Os02t0471500-01"/>
    <property type="gene ID" value="Os02g0471500"/>
</dbReference>
<dbReference type="Gramene" id="Os02t0471500-02">
    <property type="protein sequence ID" value="Os02t0471500-02"/>
    <property type="gene ID" value="Os02g0471500"/>
</dbReference>
<dbReference type="KEGG" id="dosa:Os02g0471500"/>
<dbReference type="eggNOG" id="KOG0698">
    <property type="taxonomic scope" value="Eukaryota"/>
</dbReference>
<dbReference type="HOGENOM" id="CLU_013173_6_0_1"/>
<dbReference type="InParanoid" id="Q6K6N7"/>
<dbReference type="OMA" id="YHRISER"/>
<dbReference type="OrthoDB" id="10264738at2759"/>
<dbReference type="Proteomes" id="UP000000763">
    <property type="component" value="Chromosome 2"/>
</dbReference>
<dbReference type="Proteomes" id="UP000059680">
    <property type="component" value="Chromosome 2"/>
</dbReference>
<dbReference type="ExpressionAtlas" id="Q6K6N7">
    <property type="expression patterns" value="baseline and differential"/>
</dbReference>
<dbReference type="GO" id="GO:0046872">
    <property type="term" value="F:metal ion binding"/>
    <property type="evidence" value="ECO:0007669"/>
    <property type="project" value="UniProtKB-KW"/>
</dbReference>
<dbReference type="GO" id="GO:0004722">
    <property type="term" value="F:protein serine/threonine phosphatase activity"/>
    <property type="evidence" value="ECO:0000318"/>
    <property type="project" value="GO_Central"/>
</dbReference>
<dbReference type="GO" id="GO:1902531">
    <property type="term" value="P:regulation of intracellular signal transduction"/>
    <property type="evidence" value="ECO:0000318"/>
    <property type="project" value="GO_Central"/>
</dbReference>
<dbReference type="CDD" id="cd00143">
    <property type="entry name" value="PP2Cc"/>
    <property type="match status" value="1"/>
</dbReference>
<dbReference type="FunFam" id="3.60.40.10:FF:000024">
    <property type="entry name" value="probable protein phosphatase 2C 33"/>
    <property type="match status" value="1"/>
</dbReference>
<dbReference type="Gene3D" id="3.60.40.10">
    <property type="entry name" value="PPM-type phosphatase domain"/>
    <property type="match status" value="1"/>
</dbReference>
<dbReference type="InterPro" id="IPR015655">
    <property type="entry name" value="PP2C"/>
</dbReference>
<dbReference type="InterPro" id="IPR036457">
    <property type="entry name" value="PPM-type-like_dom_sf"/>
</dbReference>
<dbReference type="InterPro" id="IPR001932">
    <property type="entry name" value="PPM-type_phosphatase-like_dom"/>
</dbReference>
<dbReference type="PANTHER" id="PTHR47992">
    <property type="entry name" value="PROTEIN PHOSPHATASE"/>
    <property type="match status" value="1"/>
</dbReference>
<dbReference type="Pfam" id="PF00481">
    <property type="entry name" value="PP2C"/>
    <property type="match status" value="1"/>
</dbReference>
<dbReference type="SMART" id="SM00332">
    <property type="entry name" value="PP2Cc"/>
    <property type="match status" value="1"/>
</dbReference>
<dbReference type="SUPFAM" id="SSF81606">
    <property type="entry name" value="PP2C-like"/>
    <property type="match status" value="1"/>
</dbReference>
<dbReference type="PROSITE" id="PS51746">
    <property type="entry name" value="PPM_2"/>
    <property type="match status" value="1"/>
</dbReference>
<accession>Q6K6N7</accession>
<accession>A0A0P0VIU2</accession>
<accession>Q8RVS2</accession>
<comment type="catalytic activity">
    <reaction>
        <text>O-phospho-L-seryl-[protein] + H2O = L-seryl-[protein] + phosphate</text>
        <dbReference type="Rhea" id="RHEA:20629"/>
        <dbReference type="Rhea" id="RHEA-COMP:9863"/>
        <dbReference type="Rhea" id="RHEA-COMP:11604"/>
        <dbReference type="ChEBI" id="CHEBI:15377"/>
        <dbReference type="ChEBI" id="CHEBI:29999"/>
        <dbReference type="ChEBI" id="CHEBI:43474"/>
        <dbReference type="ChEBI" id="CHEBI:83421"/>
        <dbReference type="EC" id="3.1.3.16"/>
    </reaction>
</comment>
<comment type="catalytic activity">
    <reaction>
        <text>O-phospho-L-threonyl-[protein] + H2O = L-threonyl-[protein] + phosphate</text>
        <dbReference type="Rhea" id="RHEA:47004"/>
        <dbReference type="Rhea" id="RHEA-COMP:11060"/>
        <dbReference type="Rhea" id="RHEA-COMP:11605"/>
        <dbReference type="ChEBI" id="CHEBI:15377"/>
        <dbReference type="ChEBI" id="CHEBI:30013"/>
        <dbReference type="ChEBI" id="CHEBI:43474"/>
        <dbReference type="ChEBI" id="CHEBI:61977"/>
        <dbReference type="EC" id="3.1.3.16"/>
    </reaction>
</comment>
<comment type="cofactor">
    <cofactor evidence="1">
        <name>Mg(2+)</name>
        <dbReference type="ChEBI" id="CHEBI:18420"/>
    </cofactor>
    <cofactor evidence="1">
        <name>Mn(2+)</name>
        <dbReference type="ChEBI" id="CHEBI:29035"/>
    </cofactor>
    <text evidence="1">Binds 2 magnesium or manganese ions per subunit.</text>
</comment>
<comment type="similarity">
    <text evidence="4">Belongs to the PP2C family.</text>
</comment>
<keyword id="KW-0378">Hydrolase</keyword>
<keyword id="KW-0460">Magnesium</keyword>
<keyword id="KW-0464">Manganese</keyword>
<keyword id="KW-0479">Metal-binding</keyword>
<keyword id="KW-0904">Protein phosphatase</keyword>
<keyword id="KW-1185">Reference proteome</keyword>
<organism>
    <name type="scientific">Oryza sativa subsp. japonica</name>
    <name type="common">Rice</name>
    <dbReference type="NCBI Taxonomy" id="39947"/>
    <lineage>
        <taxon>Eukaryota</taxon>
        <taxon>Viridiplantae</taxon>
        <taxon>Streptophyta</taxon>
        <taxon>Embryophyta</taxon>
        <taxon>Tracheophyta</taxon>
        <taxon>Spermatophyta</taxon>
        <taxon>Magnoliopsida</taxon>
        <taxon>Liliopsida</taxon>
        <taxon>Poales</taxon>
        <taxon>Poaceae</taxon>
        <taxon>BOP clade</taxon>
        <taxon>Oryzoideae</taxon>
        <taxon>Oryzeae</taxon>
        <taxon>Oryzinae</taxon>
        <taxon>Oryza</taxon>
        <taxon>Oryza sativa</taxon>
    </lineage>
</organism>
<proteinExistence type="evidence at transcript level"/>
<feature type="chain" id="PRO_0000363260" description="Probable protein phosphatase 2C 14">
    <location>
        <begin position="1"/>
        <end position="518"/>
    </location>
</feature>
<feature type="domain" description="PPM-type phosphatase" evidence="2">
    <location>
        <begin position="129"/>
        <end position="437"/>
    </location>
</feature>
<feature type="region of interest" description="Disordered" evidence="3">
    <location>
        <begin position="1"/>
        <end position="31"/>
    </location>
</feature>
<feature type="region of interest" description="Disordered" evidence="3">
    <location>
        <begin position="86"/>
        <end position="108"/>
    </location>
</feature>
<feature type="region of interest" description="Disordered" evidence="3">
    <location>
        <begin position="192"/>
        <end position="222"/>
    </location>
</feature>
<feature type="compositionally biased region" description="Low complexity" evidence="3">
    <location>
        <begin position="1"/>
        <end position="10"/>
    </location>
</feature>
<feature type="compositionally biased region" description="Low complexity" evidence="3">
    <location>
        <begin position="86"/>
        <end position="105"/>
    </location>
</feature>
<feature type="compositionally biased region" description="Polar residues" evidence="3">
    <location>
        <begin position="197"/>
        <end position="213"/>
    </location>
</feature>
<feature type="binding site" evidence="1">
    <location>
        <position position="165"/>
    </location>
    <ligand>
        <name>Mn(2+)</name>
        <dbReference type="ChEBI" id="CHEBI:29035"/>
        <label>1</label>
    </ligand>
</feature>
<feature type="binding site" evidence="1">
    <location>
        <position position="165"/>
    </location>
    <ligand>
        <name>Mn(2+)</name>
        <dbReference type="ChEBI" id="CHEBI:29035"/>
        <label>2</label>
    </ligand>
</feature>
<feature type="binding site" evidence="1">
    <location>
        <position position="166"/>
    </location>
    <ligand>
        <name>Mn(2+)</name>
        <dbReference type="ChEBI" id="CHEBI:29035"/>
        <label>1</label>
    </ligand>
</feature>
<feature type="binding site" evidence="1">
    <location>
        <position position="382"/>
    </location>
    <ligand>
        <name>Mn(2+)</name>
        <dbReference type="ChEBI" id="CHEBI:29035"/>
        <label>2</label>
    </ligand>
</feature>
<feature type="binding site" evidence="1">
    <location>
        <position position="428"/>
    </location>
    <ligand>
        <name>Mn(2+)</name>
        <dbReference type="ChEBI" id="CHEBI:29035"/>
        <label>2</label>
    </ligand>
</feature>
<protein>
    <recommendedName>
        <fullName>Probable protein phosphatase 2C 14</fullName>
        <shortName>OsPP2C14</shortName>
        <ecNumber>3.1.3.16</ecNumber>
    </recommendedName>
</protein>
<evidence type="ECO:0000250" key="1"/>
<evidence type="ECO:0000255" key="2">
    <source>
        <dbReference type="PROSITE-ProRule" id="PRU01082"/>
    </source>
</evidence>
<evidence type="ECO:0000256" key="3">
    <source>
        <dbReference type="SAM" id="MobiDB-lite"/>
    </source>
</evidence>
<evidence type="ECO:0000305" key="4"/>
<sequence>MVEAAAGRRSGANRRRPSGGGERRRQQQQHQRLVAVAVAARVVMVAPAATPAPAAGGGGGCVEDILGCLLGVLRALGVTWAAAARPQRQQPRLAAQTPRGPAPGADGRRAAAELRGIPGRIAGNGACAVASLYTLQGKKGVNQDAMIVWENFCSREDTIFCGVFDGHGPNGHLVAKRVRDLLPIKLGADLGTDEGRQTSTSSIKSNGDETGSPGNMGRDAEQNGEYPEIFTALRTSFLRAFNVMDRDLKLHKSIDCFFSGTTAVAVLKQGRNLIIGNLGDSRAILGTRDKDNQLMAVQLTVDLKPNIPSEAQRIRQRRGRIFALPEEPEVARVWLPKYNSPGLAMARAFGDFCLKDYGLISMPEVSYHRITEKDEFVVLATDGVWDVLSNTEVVSIVNRATSRASAARLLVESAHRAWRARFPTSKIDDCAVVCLFLDTDELSETSSSMARDMTNAVEVSSGQHSNTIQLSTGVSSDVVTAVLTDGDDLSAVDAVAKLVTLTDLPNNASGATQSITTK</sequence>
<name>P2C14_ORYSJ</name>
<gene>
    <name type="ordered locus">Os02g0471500</name>
    <name type="ordered locus">LOC_Os02g27220</name>
    <name type="ORF">P0046H03.1</name>
    <name type="ORF">P0403C01.30</name>
</gene>